<dbReference type="EMBL" id="D16441">
    <property type="protein sequence ID" value="BAA03910.1"/>
    <property type="molecule type" value="mRNA"/>
</dbReference>
<dbReference type="SMR" id="P56158"/>
<dbReference type="GO" id="GO:0000785">
    <property type="term" value="C:chromatin"/>
    <property type="evidence" value="ECO:0007669"/>
    <property type="project" value="TreeGrafter"/>
</dbReference>
<dbReference type="GO" id="GO:0005634">
    <property type="term" value="C:nucleus"/>
    <property type="evidence" value="ECO:0007669"/>
    <property type="project" value="UniProtKB-SubCell"/>
</dbReference>
<dbReference type="GO" id="GO:0000981">
    <property type="term" value="F:DNA-binding transcription factor activity, RNA polymerase II-specific"/>
    <property type="evidence" value="ECO:0007669"/>
    <property type="project" value="TreeGrafter"/>
</dbReference>
<dbReference type="GO" id="GO:0000978">
    <property type="term" value="F:RNA polymerase II cis-regulatory region sequence-specific DNA binding"/>
    <property type="evidence" value="ECO:0007669"/>
    <property type="project" value="InterPro"/>
</dbReference>
<dbReference type="GO" id="GO:0001708">
    <property type="term" value="P:cell fate specification"/>
    <property type="evidence" value="ECO:0007669"/>
    <property type="project" value="TreeGrafter"/>
</dbReference>
<dbReference type="GO" id="GO:0045893">
    <property type="term" value="P:positive regulation of DNA-templated transcription"/>
    <property type="evidence" value="ECO:0007669"/>
    <property type="project" value="InterPro"/>
</dbReference>
<dbReference type="CDD" id="cd20192">
    <property type="entry name" value="T-box_TBXT_TBX19-like"/>
    <property type="match status" value="1"/>
</dbReference>
<dbReference type="FunFam" id="2.60.40.820:FF:000002">
    <property type="entry name" value="T-box transcription factor Brachyury"/>
    <property type="match status" value="1"/>
</dbReference>
<dbReference type="Gene3D" id="2.60.40.820">
    <property type="entry name" value="Transcription factor, T-box"/>
    <property type="match status" value="1"/>
</dbReference>
<dbReference type="InterPro" id="IPR008967">
    <property type="entry name" value="p53-like_TF_DNA-bd_sf"/>
</dbReference>
<dbReference type="InterPro" id="IPR046360">
    <property type="entry name" value="T-box_DNA-bd"/>
</dbReference>
<dbReference type="InterPro" id="IPR036960">
    <property type="entry name" value="T-box_sf"/>
</dbReference>
<dbReference type="InterPro" id="IPR002070">
    <property type="entry name" value="TF_Brachyury"/>
</dbReference>
<dbReference type="InterPro" id="IPR001699">
    <property type="entry name" value="TF_T-box"/>
</dbReference>
<dbReference type="InterPro" id="IPR018186">
    <property type="entry name" value="TF_T-box_CS"/>
</dbReference>
<dbReference type="PANTHER" id="PTHR11267">
    <property type="entry name" value="T-BOX PROTEIN-RELATED"/>
    <property type="match status" value="1"/>
</dbReference>
<dbReference type="PANTHER" id="PTHR11267:SF106">
    <property type="entry name" value="T-RELATED PROTEIN"/>
    <property type="match status" value="1"/>
</dbReference>
<dbReference type="Pfam" id="PF00907">
    <property type="entry name" value="T-box"/>
    <property type="match status" value="1"/>
</dbReference>
<dbReference type="PRINTS" id="PR00938">
    <property type="entry name" value="BRACHYURY"/>
</dbReference>
<dbReference type="PRINTS" id="PR00937">
    <property type="entry name" value="TBOX"/>
</dbReference>
<dbReference type="SMART" id="SM00425">
    <property type="entry name" value="TBOX"/>
    <property type="match status" value="1"/>
</dbReference>
<dbReference type="SUPFAM" id="SSF49417">
    <property type="entry name" value="p53-like transcription factors"/>
    <property type="match status" value="1"/>
</dbReference>
<dbReference type="PROSITE" id="PS01283">
    <property type="entry name" value="TBOX_1"/>
    <property type="match status" value="1"/>
</dbReference>
<dbReference type="PROSITE" id="PS01264">
    <property type="entry name" value="TBOX_2"/>
    <property type="match status" value="1"/>
</dbReference>
<dbReference type="PROSITE" id="PS50252">
    <property type="entry name" value="TBOX_3"/>
    <property type="match status" value="1"/>
</dbReference>
<proteinExistence type="evidence at transcript level"/>
<accession>P56158</accession>
<reference key="1">
    <citation type="journal article" date="1995" name="Dev. Growth Differ.">
        <title>An ascidian homolog of the mouse Brachyury (T) gene is expressed exclusively in notochord cells at the fate restricted stage.</title>
        <authorList>
            <person name="Yasuo H."/>
            <person name="Satoh N."/>
        </authorList>
    </citation>
    <scope>NUCLEOTIDE SEQUENCE [MRNA]</scope>
    <source>
        <tissue>Embryo</tissue>
    </source>
</reference>
<feature type="chain" id="PRO_0000184421" description="T-box transcription factor T">
    <location>
        <begin position="1"/>
        <end position="471"/>
    </location>
</feature>
<feature type="DNA-binding region" description="T-box" evidence="3">
    <location>
        <begin position="24"/>
        <end position="196"/>
    </location>
</feature>
<gene>
    <name evidence="2" type="primary">TBXT</name>
    <name type="synonym">T</name>
</gene>
<keyword id="KW-0010">Activator</keyword>
<keyword id="KW-0217">Developmental protein</keyword>
<keyword id="KW-0238">DNA-binding</keyword>
<keyword id="KW-0539">Nucleus</keyword>
<keyword id="KW-0804">Transcription</keyword>
<keyword id="KW-0805">Transcription regulation</keyword>
<comment type="function">
    <text evidence="1">Involved in the transcriptional regulation of genes required for mesoderm differentiation.</text>
</comment>
<comment type="subcellular location">
    <subcellularLocation>
        <location evidence="3">Nucleus</location>
    </subcellularLocation>
</comment>
<comment type="tissue specificity">
    <text>Developing notochord.</text>
</comment>
<comment type="developmental stage">
    <text>First detected in 64-cell embryos. Reaches maximal levels at the gastrula stage, decreases in neurula stage and barely detectable in larvae.</text>
</comment>
<organism>
    <name type="scientific">Halocynthia roretzi</name>
    <name type="common">Sea squirt</name>
    <name type="synonym">Cynthia roretzi</name>
    <dbReference type="NCBI Taxonomy" id="7729"/>
    <lineage>
        <taxon>Eukaryota</taxon>
        <taxon>Metazoa</taxon>
        <taxon>Chordata</taxon>
        <taxon>Tunicata</taxon>
        <taxon>Ascidiacea</taxon>
        <taxon>Stolidobranchia</taxon>
        <taxon>Pyuridae</taxon>
        <taxon>Halocynthia</taxon>
    </lineage>
</organism>
<evidence type="ECO:0000250" key="1"/>
<evidence type="ECO:0000250" key="2">
    <source>
        <dbReference type="UniProtKB" id="O15178"/>
    </source>
</evidence>
<evidence type="ECO:0000255" key="3">
    <source>
        <dbReference type="PROSITE-ProRule" id="PRU00201"/>
    </source>
</evidence>
<evidence type="ECO:0000305" key="4"/>
<name>TBXT_HALRO</name>
<protein>
    <recommendedName>
        <fullName evidence="4">T-box transcription factor T</fullName>
    </recommendedName>
    <alternativeName>
        <fullName>AS-T</fullName>
    </alternativeName>
    <alternativeName>
        <fullName evidence="4">Brachyury protein homolog</fullName>
    </alternativeName>
    <alternativeName>
        <fullName>Protein T</fullName>
    </alternativeName>
</protein>
<sequence length="471" mass="52417">MSITNNMESPSDSEVRLTLNDRALWTKFCSLTNEMIVTKSGRRMFPVLKLTASGLEPNSMYSFLLDFAPADSNRWKYVNGEWVPGGKPEPHAASCVYVHPDSPNFGSHWMKQPVSFNKVKLTNKGNGGGQQIMLNSLHKYEPRIHVVKVGGEAASERTIATFSFPESQFIAVTAYQNEEVTSLKIKHNPFAKAFLDAKERPDQTDFHSLAGIPVSSPQVPSWYGRNGSTSSARHFTHCNSYGGESELTSVQDTAIPSYTSRNCMRNSYRGNARATPYTIPHKELTCQATSFPEPVPNDGFYPMFPNSELLPRTTLNNYSPAMGAYTNSSIVTSSDIQSGNNNNFFYSNNNNINTTDEVPTTYMTNDFNSFYNQSSNSGMPGTTYLPYQSSPVNQFYSYQPPYSTEIADISPTQQDIINAQNPYQTAWTPPLSYDGCSTMYNSITPYSSSGESTTSEMTLLATARYLQNLRL</sequence>